<gene>
    <name evidence="4" type="primary">TAF1B</name>
    <name evidence="4" type="ORF">CG6241</name>
</gene>
<feature type="chain" id="PRO_0000416876" description="TATA box-binding protein-associated factor RNA polymerase I subunit B">
    <location>
        <begin position="1"/>
        <end position="872"/>
    </location>
</feature>
<feature type="zinc finger region" description="RRN7-type">
    <location>
        <begin position="6"/>
        <end position="40"/>
    </location>
</feature>
<feature type="region of interest" description="B-reader" evidence="1">
    <location>
        <begin position="41"/>
        <end position="72"/>
    </location>
</feature>
<feature type="region of interest" description="B-linker" evidence="1">
    <location>
        <begin position="73"/>
        <end position="84"/>
    </location>
</feature>
<feature type="region of interest" description="N-terminal cyclin fold" evidence="1">
    <location>
        <begin position="85"/>
        <end position="312"/>
    </location>
</feature>
<feature type="region of interest" description="Disordered" evidence="2">
    <location>
        <begin position="187"/>
        <end position="206"/>
    </location>
</feature>
<feature type="binding site" evidence="1">
    <location>
        <position position="15"/>
    </location>
    <ligand>
        <name>Zn(2+)</name>
        <dbReference type="ChEBI" id="CHEBI:29105"/>
    </ligand>
</feature>
<feature type="binding site" evidence="1">
    <location>
        <position position="18"/>
    </location>
    <ligand>
        <name>Zn(2+)</name>
        <dbReference type="ChEBI" id="CHEBI:29105"/>
    </ligand>
</feature>
<feature type="binding site" evidence="1">
    <location>
        <position position="32"/>
    </location>
    <ligand>
        <name>Zn(2+)</name>
        <dbReference type="ChEBI" id="CHEBI:29105"/>
    </ligand>
</feature>
<feature type="binding site" evidence="1">
    <location>
        <position position="35"/>
    </location>
    <ligand>
        <name>Zn(2+)</name>
        <dbReference type="ChEBI" id="CHEBI:29105"/>
    </ligand>
</feature>
<feature type="sequence conflict" description="In Ref. 3; AAZ66309." evidence="3" ref="3">
    <original>P</original>
    <variation>Q</variation>
    <location>
        <position position="766"/>
    </location>
</feature>
<sequence>MEEVLETMQLENMHCDVCEGTTFQEREGFYYCVECGTQKDQIRAVDITAEDNFDDTAAGRYTARTIRQKKDTEKEDEDDITSWEFYNYVLRGFLQELLNMGAKPELKLMTLQVWAAYLDSMEVAFSKSNKTGLPKLNVRALPIDARIIYNHKTFKKGKKGKKSTLTGDPNDERAKFRLWNRTKRNLDASGYRSHGGASESEGEQSLHLQWSMRARKSLKRHMPLKHLDKHSRDSKGSMSCHSLRPRVKQLHNFDRNIYCLNIIKLYVVLGIALNMVEDDIQLSDLLRFIDEEHLTKRCMLNYLPGNVAAKGKALLKDMELSKMKDKVTNKLLRVNIACMSRFINLSEYQKPNLHSLAERYILELALPPRLLKYVNSLLDLHPPTFFNAMTVHPYPRYEARTMAYILYAMKLLFGLDDLKERNISESAAKINEKLLEVGGDEAPLLFVFTEWMEFVEMRKVIVSHYNQSFARRFGVSTRTGCQVDDILAKEWKEKEQGETFGWMQGSAAMKRQHENLTHIIETMLKDHFGESSKESMEKEHIEFQPSLTPAHSYFNRILLQVSRSDGAKMKITIPDHMKVDHSARNLDPFVLETTELSQYLSQHGLKLRVEELACQEDIQNVGIFRPLTIIRGDGREYRANTEIKTETWISELKRKEKRPDFRFTQPTGTYGARYLKRITMRDARRVQLEINNPFWDVTETPSFLLKLNDNEIPLDSLSSLQTFEEGTMDPLNIPLDLPRRNLEKILNPEGSDRASDQVASDINDEPPSPETLLLQVSNFDCWLLHGYMKRIRRHDKHELRQLFPCSFRWLLETCASTIGIVWEELYEELLIVEVMYHHSIRDWSNHRNYLCIQHNTQEKDIRTLARTYKELW</sequence>
<protein>
    <recommendedName>
        <fullName>TATA box-binding protein-associated factor RNA polymerase I subunit B</fullName>
    </recommendedName>
    <alternativeName>
        <fullName>TATA box-binding protein-associated factor 1B</fullName>
        <shortName>TBP-associated factor 1B</shortName>
    </alternativeName>
</protein>
<comment type="function">
    <text evidence="1">Component of RNA polymerase I core factor complex that acts as a GTF2B/TFIIB-like factor and plays a key role in multiple steps during transcription initiation such as pre-initiation complex (PIC) assembly and postpolymerase recruitment events in polymerase I (Pol I) transcription. Binds rDNA promoters and plays a role in Pol I recruitment (By similarity).</text>
</comment>
<comment type="interaction">
    <interactant intactId="EBI-104191">
        <id>Q9VH20</id>
    </interactant>
    <interactant intactId="EBI-3403932">
        <id>P20028</id>
        <label>Polr1B</label>
    </interactant>
    <organismsDiffer>false</organismsDiffer>
    <experiments>4</experiments>
</comment>
<comment type="interaction">
    <interactant intactId="EBI-104191">
        <id>Q9VH20</id>
    </interactant>
    <interactant intactId="EBI-126425">
        <id>A1Z7A5</id>
        <label>udd</label>
    </interactant>
    <organismsDiffer>false</organismsDiffer>
    <experiments>5</experiments>
</comment>
<comment type="subcellular location">
    <subcellularLocation>
        <location evidence="1">Nucleus</location>
        <location evidence="1">Nucleolus</location>
    </subcellularLocation>
</comment>
<comment type="domain">
    <text evidence="1">Although it shares weak sequence similarity with GTF2B/TFIIB, displays a similar subdomain organization as GTF2B/TFIIB, with a N-terminal zinc finger, a connecting region (composed of B-reader and B-linker regions), followed by 2 cyclin folds.</text>
</comment>
<comment type="similarity">
    <text evidence="3">Belongs to the RRN7/TAF1B family.</text>
</comment>
<keyword id="KW-0238">DNA-binding</keyword>
<keyword id="KW-0479">Metal-binding</keyword>
<keyword id="KW-0539">Nucleus</keyword>
<keyword id="KW-1185">Reference proteome</keyword>
<keyword id="KW-0804">Transcription</keyword>
<keyword id="KW-0805">Transcription regulation</keyword>
<keyword id="KW-0862">Zinc</keyword>
<keyword id="KW-0863">Zinc-finger</keyword>
<proteinExistence type="evidence at protein level"/>
<accession>Q9VH20</accession>
<accession>Q494H4</accession>
<accession>Q8MRI0</accession>
<organism>
    <name type="scientific">Drosophila melanogaster</name>
    <name type="common">Fruit fly</name>
    <dbReference type="NCBI Taxonomy" id="7227"/>
    <lineage>
        <taxon>Eukaryota</taxon>
        <taxon>Metazoa</taxon>
        <taxon>Ecdysozoa</taxon>
        <taxon>Arthropoda</taxon>
        <taxon>Hexapoda</taxon>
        <taxon>Insecta</taxon>
        <taxon>Pterygota</taxon>
        <taxon>Neoptera</taxon>
        <taxon>Endopterygota</taxon>
        <taxon>Diptera</taxon>
        <taxon>Brachycera</taxon>
        <taxon>Muscomorpha</taxon>
        <taxon>Ephydroidea</taxon>
        <taxon>Drosophilidae</taxon>
        <taxon>Drosophila</taxon>
        <taxon>Sophophora</taxon>
    </lineage>
</organism>
<name>TAF1B_DROME</name>
<reference key="1">
    <citation type="journal article" date="2000" name="Science">
        <title>The genome sequence of Drosophila melanogaster.</title>
        <authorList>
            <person name="Adams M.D."/>
            <person name="Celniker S.E."/>
            <person name="Holt R.A."/>
            <person name="Evans C.A."/>
            <person name="Gocayne J.D."/>
            <person name="Amanatides P.G."/>
            <person name="Scherer S.E."/>
            <person name="Li P.W."/>
            <person name="Hoskins R.A."/>
            <person name="Galle R.F."/>
            <person name="George R.A."/>
            <person name="Lewis S.E."/>
            <person name="Richards S."/>
            <person name="Ashburner M."/>
            <person name="Henderson S.N."/>
            <person name="Sutton G.G."/>
            <person name="Wortman J.R."/>
            <person name="Yandell M.D."/>
            <person name="Zhang Q."/>
            <person name="Chen L.X."/>
            <person name="Brandon R.C."/>
            <person name="Rogers Y.-H.C."/>
            <person name="Blazej R.G."/>
            <person name="Champe M."/>
            <person name="Pfeiffer B.D."/>
            <person name="Wan K.H."/>
            <person name="Doyle C."/>
            <person name="Baxter E.G."/>
            <person name="Helt G."/>
            <person name="Nelson C.R."/>
            <person name="Miklos G.L.G."/>
            <person name="Abril J.F."/>
            <person name="Agbayani A."/>
            <person name="An H.-J."/>
            <person name="Andrews-Pfannkoch C."/>
            <person name="Baldwin D."/>
            <person name="Ballew R.M."/>
            <person name="Basu A."/>
            <person name="Baxendale J."/>
            <person name="Bayraktaroglu L."/>
            <person name="Beasley E.M."/>
            <person name="Beeson K.Y."/>
            <person name="Benos P.V."/>
            <person name="Berman B.P."/>
            <person name="Bhandari D."/>
            <person name="Bolshakov S."/>
            <person name="Borkova D."/>
            <person name="Botchan M.R."/>
            <person name="Bouck J."/>
            <person name="Brokstein P."/>
            <person name="Brottier P."/>
            <person name="Burtis K.C."/>
            <person name="Busam D.A."/>
            <person name="Butler H."/>
            <person name="Cadieu E."/>
            <person name="Center A."/>
            <person name="Chandra I."/>
            <person name="Cherry J.M."/>
            <person name="Cawley S."/>
            <person name="Dahlke C."/>
            <person name="Davenport L.B."/>
            <person name="Davies P."/>
            <person name="de Pablos B."/>
            <person name="Delcher A."/>
            <person name="Deng Z."/>
            <person name="Mays A.D."/>
            <person name="Dew I."/>
            <person name="Dietz S.M."/>
            <person name="Dodson K."/>
            <person name="Doup L.E."/>
            <person name="Downes M."/>
            <person name="Dugan-Rocha S."/>
            <person name="Dunkov B.C."/>
            <person name="Dunn P."/>
            <person name="Durbin K.J."/>
            <person name="Evangelista C.C."/>
            <person name="Ferraz C."/>
            <person name="Ferriera S."/>
            <person name="Fleischmann W."/>
            <person name="Fosler C."/>
            <person name="Gabrielian A.E."/>
            <person name="Garg N.S."/>
            <person name="Gelbart W.M."/>
            <person name="Glasser K."/>
            <person name="Glodek A."/>
            <person name="Gong F."/>
            <person name="Gorrell J.H."/>
            <person name="Gu Z."/>
            <person name="Guan P."/>
            <person name="Harris M."/>
            <person name="Harris N.L."/>
            <person name="Harvey D.A."/>
            <person name="Heiman T.J."/>
            <person name="Hernandez J.R."/>
            <person name="Houck J."/>
            <person name="Hostin D."/>
            <person name="Houston K.A."/>
            <person name="Howland T.J."/>
            <person name="Wei M.-H."/>
            <person name="Ibegwam C."/>
            <person name="Jalali M."/>
            <person name="Kalush F."/>
            <person name="Karpen G.H."/>
            <person name="Ke Z."/>
            <person name="Kennison J.A."/>
            <person name="Ketchum K.A."/>
            <person name="Kimmel B.E."/>
            <person name="Kodira C.D."/>
            <person name="Kraft C.L."/>
            <person name="Kravitz S."/>
            <person name="Kulp D."/>
            <person name="Lai Z."/>
            <person name="Lasko P."/>
            <person name="Lei Y."/>
            <person name="Levitsky A.A."/>
            <person name="Li J.H."/>
            <person name="Li Z."/>
            <person name="Liang Y."/>
            <person name="Lin X."/>
            <person name="Liu X."/>
            <person name="Mattei B."/>
            <person name="McIntosh T.C."/>
            <person name="McLeod M.P."/>
            <person name="McPherson D."/>
            <person name="Merkulov G."/>
            <person name="Milshina N.V."/>
            <person name="Mobarry C."/>
            <person name="Morris J."/>
            <person name="Moshrefi A."/>
            <person name="Mount S.M."/>
            <person name="Moy M."/>
            <person name="Murphy B."/>
            <person name="Murphy L."/>
            <person name="Muzny D.M."/>
            <person name="Nelson D.L."/>
            <person name="Nelson D.R."/>
            <person name="Nelson K.A."/>
            <person name="Nixon K."/>
            <person name="Nusskern D.R."/>
            <person name="Pacleb J.M."/>
            <person name="Palazzolo M."/>
            <person name="Pittman G.S."/>
            <person name="Pan S."/>
            <person name="Pollard J."/>
            <person name="Puri V."/>
            <person name="Reese M.G."/>
            <person name="Reinert K."/>
            <person name="Remington K."/>
            <person name="Saunders R.D.C."/>
            <person name="Scheeler F."/>
            <person name="Shen H."/>
            <person name="Shue B.C."/>
            <person name="Siden-Kiamos I."/>
            <person name="Simpson M."/>
            <person name="Skupski M.P."/>
            <person name="Smith T.J."/>
            <person name="Spier E."/>
            <person name="Spradling A.C."/>
            <person name="Stapleton M."/>
            <person name="Strong R."/>
            <person name="Sun E."/>
            <person name="Svirskas R."/>
            <person name="Tector C."/>
            <person name="Turner R."/>
            <person name="Venter E."/>
            <person name="Wang A.H."/>
            <person name="Wang X."/>
            <person name="Wang Z.-Y."/>
            <person name="Wassarman D.A."/>
            <person name="Weinstock G.M."/>
            <person name="Weissenbach J."/>
            <person name="Williams S.M."/>
            <person name="Woodage T."/>
            <person name="Worley K.C."/>
            <person name="Wu D."/>
            <person name="Yang S."/>
            <person name="Yao Q.A."/>
            <person name="Ye J."/>
            <person name="Yeh R.-F."/>
            <person name="Zaveri J.S."/>
            <person name="Zhan M."/>
            <person name="Zhang G."/>
            <person name="Zhao Q."/>
            <person name="Zheng L."/>
            <person name="Zheng X.H."/>
            <person name="Zhong F.N."/>
            <person name="Zhong W."/>
            <person name="Zhou X."/>
            <person name="Zhu S.C."/>
            <person name="Zhu X."/>
            <person name="Smith H.O."/>
            <person name="Gibbs R.A."/>
            <person name="Myers E.W."/>
            <person name="Rubin G.M."/>
            <person name="Venter J.C."/>
        </authorList>
    </citation>
    <scope>NUCLEOTIDE SEQUENCE [LARGE SCALE GENOMIC DNA]</scope>
    <source>
        <strain>Berkeley</strain>
    </source>
</reference>
<reference key="2">
    <citation type="journal article" date="2002" name="Genome Biol.">
        <title>Annotation of the Drosophila melanogaster euchromatic genome: a systematic review.</title>
        <authorList>
            <person name="Misra S."/>
            <person name="Crosby M.A."/>
            <person name="Mungall C.J."/>
            <person name="Matthews B.B."/>
            <person name="Campbell K.S."/>
            <person name="Hradecky P."/>
            <person name="Huang Y."/>
            <person name="Kaminker J.S."/>
            <person name="Millburn G.H."/>
            <person name="Prochnik S.E."/>
            <person name="Smith C.D."/>
            <person name="Tupy J.L."/>
            <person name="Whitfield E.J."/>
            <person name="Bayraktaroglu L."/>
            <person name="Berman B.P."/>
            <person name="Bettencourt B.R."/>
            <person name="Celniker S.E."/>
            <person name="de Grey A.D.N.J."/>
            <person name="Drysdale R.A."/>
            <person name="Harris N.L."/>
            <person name="Richter J."/>
            <person name="Russo S."/>
            <person name="Schroeder A.J."/>
            <person name="Shu S.Q."/>
            <person name="Stapleton M."/>
            <person name="Yamada C."/>
            <person name="Ashburner M."/>
            <person name="Gelbart W.M."/>
            <person name="Rubin G.M."/>
            <person name="Lewis S.E."/>
        </authorList>
    </citation>
    <scope>GENOME REANNOTATION</scope>
    <source>
        <strain>Berkeley</strain>
    </source>
</reference>
<reference key="3">
    <citation type="submission" date="2009-01" db="EMBL/GenBank/DDBJ databases">
        <authorList>
            <person name="Carlson J."/>
            <person name="Booth B."/>
            <person name="Frise E."/>
            <person name="Park S."/>
            <person name="Wan K."/>
            <person name="Yu C."/>
            <person name="Celniker S."/>
        </authorList>
    </citation>
    <scope>NUCLEOTIDE SEQUENCE [LARGE SCALE MRNA]</scope>
    <source>
        <strain>Berkeley</strain>
        <tissue>Embryo</tissue>
    </source>
</reference>
<reference key="4">
    <citation type="journal article" date="2002" name="Genome Biol.">
        <title>A Drosophila full-length cDNA resource.</title>
        <authorList>
            <person name="Stapleton M."/>
            <person name="Carlson J.W."/>
            <person name="Brokstein P."/>
            <person name="Yu C."/>
            <person name="Champe M."/>
            <person name="George R.A."/>
            <person name="Guarin H."/>
            <person name="Kronmiller B."/>
            <person name="Pacleb J.M."/>
            <person name="Park S."/>
            <person name="Wan K.H."/>
            <person name="Rubin G.M."/>
            <person name="Celniker S.E."/>
        </authorList>
    </citation>
    <scope>NUCLEOTIDE SEQUENCE [LARGE SCALE MRNA] OF 72-872</scope>
    <source>
        <strain>Berkeley</strain>
        <tissue>Embryo</tissue>
    </source>
</reference>
<dbReference type="EMBL" id="AE014297">
    <property type="protein sequence ID" value="AAF54500.1"/>
    <property type="molecule type" value="Genomic_DNA"/>
</dbReference>
<dbReference type="EMBL" id="BT023802">
    <property type="protein sequence ID" value="AAZ66309.1"/>
    <property type="molecule type" value="mRNA"/>
</dbReference>
<dbReference type="EMBL" id="BT057993">
    <property type="protein sequence ID" value="ACM16703.1"/>
    <property type="molecule type" value="mRNA"/>
</dbReference>
<dbReference type="EMBL" id="AY119611">
    <property type="protein sequence ID" value="AAM50265.1"/>
    <property type="molecule type" value="mRNA"/>
</dbReference>
<dbReference type="RefSeq" id="NP_001262451.1">
    <property type="nucleotide sequence ID" value="NM_001275522.1"/>
</dbReference>
<dbReference type="RefSeq" id="NP_649982.1">
    <property type="nucleotide sequence ID" value="NM_141725.3"/>
</dbReference>
<dbReference type="BioGRID" id="66393">
    <property type="interactions" value="5"/>
</dbReference>
<dbReference type="DIP" id="DIP-61426N"/>
<dbReference type="FunCoup" id="Q9VH20">
    <property type="interactions" value="565"/>
</dbReference>
<dbReference type="IntAct" id="Q9VH20">
    <property type="interactions" value="7"/>
</dbReference>
<dbReference type="STRING" id="7227.FBpp0305959"/>
<dbReference type="PaxDb" id="7227-FBpp0305959"/>
<dbReference type="DNASU" id="41242"/>
<dbReference type="EnsemblMetazoa" id="FBtr0082185">
    <property type="protein sequence ID" value="FBpp0081663"/>
    <property type="gene ID" value="FBgn0037792"/>
</dbReference>
<dbReference type="EnsemblMetazoa" id="FBtr0333825">
    <property type="protein sequence ID" value="FBpp0305959"/>
    <property type="gene ID" value="FBgn0037792"/>
</dbReference>
<dbReference type="GeneID" id="41242"/>
<dbReference type="KEGG" id="dme:Dmel_CG6241"/>
<dbReference type="UCSC" id="CG6241-RA">
    <property type="organism name" value="d. melanogaster"/>
</dbReference>
<dbReference type="AGR" id="FB:FBgn0037792"/>
<dbReference type="CTD" id="9014"/>
<dbReference type="FlyBase" id="FBgn0037792">
    <property type="gene designation" value="TAF1B"/>
</dbReference>
<dbReference type="VEuPathDB" id="VectorBase:FBgn0037792"/>
<dbReference type="eggNOG" id="ENOG502S10D">
    <property type="taxonomic scope" value="Eukaryota"/>
</dbReference>
<dbReference type="GeneTree" id="ENSGT00440000033827"/>
<dbReference type="HOGENOM" id="CLU_016145_0_0_1"/>
<dbReference type="InParanoid" id="Q9VH20"/>
<dbReference type="OMA" id="REGYYYC"/>
<dbReference type="OrthoDB" id="10069252at2759"/>
<dbReference type="PhylomeDB" id="Q9VH20"/>
<dbReference type="Reactome" id="R-DME-73772">
    <property type="pathway name" value="RNA Polymerase I Promoter Escape"/>
</dbReference>
<dbReference type="SignaLink" id="Q9VH20"/>
<dbReference type="BioGRID-ORCS" id="41242">
    <property type="hits" value="0 hits in 1 CRISPR screen"/>
</dbReference>
<dbReference type="GenomeRNAi" id="41242"/>
<dbReference type="PRO" id="PR:Q9VH20"/>
<dbReference type="Proteomes" id="UP000000803">
    <property type="component" value="Chromosome 3R"/>
</dbReference>
<dbReference type="Bgee" id="FBgn0037792">
    <property type="expression patterns" value="Expressed in spermatogonium in testis and 45 other cell types or tissues"/>
</dbReference>
<dbReference type="ExpressionAtlas" id="Q9VH20">
    <property type="expression patterns" value="baseline and differential"/>
</dbReference>
<dbReference type="GO" id="GO:0005730">
    <property type="term" value="C:nucleolus"/>
    <property type="evidence" value="ECO:0000314"/>
    <property type="project" value="FlyBase"/>
</dbReference>
<dbReference type="GO" id="GO:0070860">
    <property type="term" value="C:RNA polymerase I core factor complex"/>
    <property type="evidence" value="ECO:0000318"/>
    <property type="project" value="GO_Central"/>
</dbReference>
<dbReference type="GO" id="GO:0005668">
    <property type="term" value="C:RNA polymerase transcription factor SL1 complex"/>
    <property type="evidence" value="ECO:0000314"/>
    <property type="project" value="FlyBase"/>
</dbReference>
<dbReference type="GO" id="GO:0001164">
    <property type="term" value="F:RNA polymerase I core promoter sequence-specific DNA binding"/>
    <property type="evidence" value="ECO:0000250"/>
    <property type="project" value="UniProtKB"/>
</dbReference>
<dbReference type="GO" id="GO:0008270">
    <property type="term" value="F:zinc ion binding"/>
    <property type="evidence" value="ECO:0007669"/>
    <property type="project" value="UniProtKB-KW"/>
</dbReference>
<dbReference type="GO" id="GO:0042790">
    <property type="term" value="P:nucleolar large rRNA transcription by RNA polymerase I"/>
    <property type="evidence" value="ECO:0000315"/>
    <property type="project" value="FlyBase"/>
</dbReference>
<dbReference type="GO" id="GO:0001188">
    <property type="term" value="P:RNA polymerase I preinitiation complex assembly"/>
    <property type="evidence" value="ECO:0000250"/>
    <property type="project" value="UniProtKB"/>
</dbReference>
<dbReference type="InterPro" id="IPR048538">
    <property type="entry name" value="Rrn7_cyclin_C"/>
</dbReference>
<dbReference type="InterPro" id="IPR033599">
    <property type="entry name" value="TAF1B/Rrn7"/>
</dbReference>
<dbReference type="InterPro" id="IPR021752">
    <property type="entry name" value="TF_Rrn7_Zf"/>
</dbReference>
<dbReference type="PANTHER" id="PTHR31576">
    <property type="entry name" value="TATA BOX-BINDING PROTEIN-ASSOCIATED FACTOR RNA POLYMERASE I SUBUNIT B"/>
    <property type="match status" value="1"/>
</dbReference>
<dbReference type="PANTHER" id="PTHR31576:SF2">
    <property type="entry name" value="TATA BOX-BINDING PROTEIN-ASSOCIATED FACTOR RNA POLYMERASE I SUBUNIT B"/>
    <property type="match status" value="1"/>
</dbReference>
<dbReference type="Pfam" id="PF20645">
    <property type="entry name" value="Rrn7_cyclin_C"/>
    <property type="match status" value="1"/>
</dbReference>
<dbReference type="Pfam" id="PF11781">
    <property type="entry name" value="Zn_ribbon_RRN7"/>
    <property type="match status" value="1"/>
</dbReference>
<evidence type="ECO:0000250" key="1"/>
<evidence type="ECO:0000256" key="2">
    <source>
        <dbReference type="SAM" id="MobiDB-lite"/>
    </source>
</evidence>
<evidence type="ECO:0000305" key="3"/>
<evidence type="ECO:0000312" key="4">
    <source>
        <dbReference type="FlyBase" id="FBgn0037792"/>
    </source>
</evidence>